<dbReference type="EMBL" id="X76075">
    <property type="protein sequence ID" value="CAA53673.1"/>
    <property type="molecule type" value="Genomic_DNA"/>
</dbReference>
<dbReference type="SMR" id="P41055"/>
<dbReference type="GO" id="GO:0005829">
    <property type="term" value="C:cytosol"/>
    <property type="evidence" value="ECO:0007669"/>
    <property type="project" value="TreeGrafter"/>
</dbReference>
<dbReference type="GO" id="GO:0005524">
    <property type="term" value="F:ATP binding"/>
    <property type="evidence" value="ECO:0007669"/>
    <property type="project" value="UniProtKB-KW"/>
</dbReference>
<dbReference type="GO" id="GO:0140664">
    <property type="term" value="F:ATP-dependent DNA damage sensor activity"/>
    <property type="evidence" value="ECO:0007669"/>
    <property type="project" value="InterPro"/>
</dbReference>
<dbReference type="GO" id="GO:0003697">
    <property type="term" value="F:single-stranded DNA binding"/>
    <property type="evidence" value="ECO:0007669"/>
    <property type="project" value="InterPro"/>
</dbReference>
<dbReference type="GO" id="GO:0006310">
    <property type="term" value="P:DNA recombination"/>
    <property type="evidence" value="ECO:0007669"/>
    <property type="project" value="UniProtKB-KW"/>
</dbReference>
<dbReference type="GO" id="GO:0006281">
    <property type="term" value="P:DNA repair"/>
    <property type="evidence" value="ECO:0007669"/>
    <property type="project" value="UniProtKB-KW"/>
</dbReference>
<dbReference type="GO" id="GO:0009432">
    <property type="term" value="P:SOS response"/>
    <property type="evidence" value="ECO:0007669"/>
    <property type="project" value="UniProtKB-KW"/>
</dbReference>
<dbReference type="Gene3D" id="3.40.50.300">
    <property type="entry name" value="P-loop containing nucleotide triphosphate hydrolases"/>
    <property type="match status" value="1"/>
</dbReference>
<dbReference type="InterPro" id="IPR013765">
    <property type="entry name" value="DNA_recomb/repair_RecA"/>
</dbReference>
<dbReference type="InterPro" id="IPR027417">
    <property type="entry name" value="P-loop_NTPase"/>
</dbReference>
<dbReference type="InterPro" id="IPR049428">
    <property type="entry name" value="RecA-like_N"/>
</dbReference>
<dbReference type="InterPro" id="IPR020588">
    <property type="entry name" value="RecA_ATP-bd"/>
</dbReference>
<dbReference type="PANTHER" id="PTHR45900:SF1">
    <property type="entry name" value="MITOCHONDRIAL DNA REPAIR PROTEIN RECA HOMOLOG-RELATED"/>
    <property type="match status" value="1"/>
</dbReference>
<dbReference type="PANTHER" id="PTHR45900">
    <property type="entry name" value="RECA"/>
    <property type="match status" value="1"/>
</dbReference>
<dbReference type="Pfam" id="PF00154">
    <property type="entry name" value="RecA"/>
    <property type="match status" value="1"/>
</dbReference>
<dbReference type="PRINTS" id="PR00142">
    <property type="entry name" value="RECA"/>
</dbReference>
<dbReference type="SUPFAM" id="SSF52540">
    <property type="entry name" value="P-loop containing nucleoside triphosphate hydrolases"/>
    <property type="match status" value="1"/>
</dbReference>
<dbReference type="PROSITE" id="PS50162">
    <property type="entry name" value="RECA_2"/>
    <property type="match status" value="1"/>
</dbReference>
<sequence length="142" mass="15053">SSGKTTLTLHAVANAPRLGGSVAFIDAEHALDPEYAKKLGVDIDSLILSQPDNGEQALEIVDMLVRSGALDLIVIDSVAALVPRAEIEGEMGDSHVGLQARLMSQALRKITSALNQSKTTAIFINQLREKIGVMFGSPETTT</sequence>
<reference key="1">
    <citation type="journal article" date="1994" name="FEMS Microbiol. Lett.">
        <title>Identification, isolation and sequencing of the recA gene of Streptomyces lividans TK24.</title>
        <authorList>
            <person name="Nussbaumer B."/>
            <person name="Wohlleben W."/>
        </authorList>
    </citation>
    <scope>NUCLEOTIDE SEQUENCE [GENOMIC DNA]</scope>
</reference>
<name>RECA_STRCT</name>
<accession>P41055</accession>
<protein>
    <recommendedName>
        <fullName>Protein RecA</fullName>
    </recommendedName>
    <alternativeName>
        <fullName>Recombinase A</fullName>
    </alternativeName>
</protein>
<proteinExistence type="inferred from homology"/>
<gene>
    <name type="primary">recA</name>
</gene>
<feature type="chain" id="PRO_0000122854" description="Protein RecA">
    <location>
        <begin position="1" status="less than"/>
        <end position="142" status="greater than"/>
    </location>
</feature>
<feature type="binding site" evidence="1">
    <location>
        <begin position="1" status="less than"/>
        <end position="5"/>
    </location>
    <ligand>
        <name>ATP</name>
        <dbReference type="ChEBI" id="CHEBI:30616"/>
    </ligand>
</feature>
<feature type="non-terminal residue">
    <location>
        <position position="1"/>
    </location>
</feature>
<feature type="non-terminal residue">
    <location>
        <position position="142"/>
    </location>
</feature>
<keyword id="KW-0067">ATP-binding</keyword>
<keyword id="KW-0963">Cytoplasm</keyword>
<keyword id="KW-0227">DNA damage</keyword>
<keyword id="KW-0233">DNA recombination</keyword>
<keyword id="KW-0234">DNA repair</keyword>
<keyword id="KW-0238">DNA-binding</keyword>
<keyword id="KW-0547">Nucleotide-binding</keyword>
<keyword id="KW-0742">SOS response</keyword>
<comment type="function">
    <text>Can catalyze the hydrolysis of ATP in the presence of single-stranded DNA, the ATP-dependent uptake of single-stranded DNA by duplex DNA, and the ATP-dependent hybridization of homologous single-stranded DNAs. It interacts with LexA causing its activation and leading to its autocatalytic cleavage.</text>
</comment>
<comment type="subcellular location">
    <subcellularLocation>
        <location evidence="1">Cytoplasm</location>
    </subcellularLocation>
</comment>
<comment type="similarity">
    <text evidence="2">Belongs to the RecA family.</text>
</comment>
<organism>
    <name type="scientific">Streptantibioticus cattleyicolor</name>
    <name type="common">Streptomyces cattleya</name>
    <dbReference type="NCBI Taxonomy" id="29303"/>
    <lineage>
        <taxon>Bacteria</taxon>
        <taxon>Bacillati</taxon>
        <taxon>Actinomycetota</taxon>
        <taxon>Actinomycetes</taxon>
        <taxon>Kitasatosporales</taxon>
        <taxon>Streptomycetaceae</taxon>
        <taxon>Streptantibioticus</taxon>
    </lineage>
</organism>
<evidence type="ECO:0000250" key="1"/>
<evidence type="ECO:0000305" key="2"/>